<gene>
    <name evidence="9" type="primary">CIMAP1A</name>
    <name type="synonym">ODF3</name>
    <name evidence="5" type="synonym">SHIPPO1</name>
    <name type="synonym">TISP50</name>
</gene>
<protein>
    <recommendedName>
        <fullName evidence="8">Ciliary microtubule associated protein 1A</fullName>
    </recommendedName>
    <alternativeName>
        <fullName>Outer dense fiber of sperm tails protein 3</fullName>
    </alternativeName>
    <alternativeName>
        <fullName>Outer dense fiber protein 3</fullName>
    </alternativeName>
    <alternativeName>
        <fullName evidence="5">Sperm tail protein SHIPPO 1</fullName>
    </alternativeName>
    <alternativeName>
        <fullName>Transcript induced in spermiogenesis protein 50</fullName>
    </alternativeName>
</protein>
<evidence type="ECO:0000250" key="1">
    <source>
        <dbReference type="UniProtKB" id="Q920N1"/>
    </source>
</evidence>
<evidence type="ECO:0000256" key="2">
    <source>
        <dbReference type="SAM" id="MobiDB-lite"/>
    </source>
</evidence>
<evidence type="ECO:0000269" key="3">
    <source>
    </source>
</evidence>
<evidence type="ECO:0000269" key="4">
    <source ref="2"/>
</evidence>
<evidence type="ECO:0000303" key="5">
    <source>
    </source>
</evidence>
<evidence type="ECO:0000303" key="6">
    <source>
    </source>
</evidence>
<evidence type="ECO:0000303" key="7">
    <source>
    </source>
</evidence>
<evidence type="ECO:0000305" key="8"/>
<evidence type="ECO:0000312" key="9">
    <source>
        <dbReference type="HGNC" id="HGNC:19905"/>
    </source>
</evidence>
<organism>
    <name type="scientific">Homo sapiens</name>
    <name type="common">Human</name>
    <dbReference type="NCBI Taxonomy" id="9606"/>
    <lineage>
        <taxon>Eukaryota</taxon>
        <taxon>Metazoa</taxon>
        <taxon>Chordata</taxon>
        <taxon>Craniata</taxon>
        <taxon>Vertebrata</taxon>
        <taxon>Euteleostomi</taxon>
        <taxon>Mammalia</taxon>
        <taxon>Eutheria</taxon>
        <taxon>Euarchontoglires</taxon>
        <taxon>Primates</taxon>
        <taxon>Haplorrhini</taxon>
        <taxon>Catarrhini</taxon>
        <taxon>Hominidae</taxon>
        <taxon>Homo</taxon>
    </lineage>
</organism>
<accession>Q96PU9</accession>
<accession>B7ZLT0</accession>
<accession>Q69YX0</accession>
<name>CMA1A_HUMAN</name>
<dbReference type="EMBL" id="AB067774">
    <property type="protein sequence ID" value="BAB70734.1"/>
    <property type="molecule type" value="mRNA"/>
</dbReference>
<dbReference type="EMBL" id="AY713299">
    <property type="protein sequence ID" value="AAW83203.1"/>
    <property type="molecule type" value="mRNA"/>
</dbReference>
<dbReference type="EMBL" id="AL133658">
    <property type="protein sequence ID" value="CAH10709.1"/>
    <property type="molecule type" value="mRNA"/>
</dbReference>
<dbReference type="EMBL" id="AC069287">
    <property type="status" value="NOT_ANNOTATED_CDS"/>
    <property type="molecule type" value="Genomic_DNA"/>
</dbReference>
<dbReference type="EMBL" id="BC126222">
    <property type="protein sequence ID" value="AAI26223.1"/>
    <property type="molecule type" value="mRNA"/>
</dbReference>
<dbReference type="EMBL" id="BC126248">
    <property type="protein sequence ID" value="AAI26249.1"/>
    <property type="molecule type" value="mRNA"/>
</dbReference>
<dbReference type="EMBL" id="BC144022">
    <property type="protein sequence ID" value="AAI44023.1"/>
    <property type="molecule type" value="mRNA"/>
</dbReference>
<dbReference type="CCDS" id="CCDS65981.1">
    <molecule id="Q96PU9-3"/>
</dbReference>
<dbReference type="CCDS" id="CCDS7688.1">
    <molecule id="Q96PU9-1"/>
</dbReference>
<dbReference type="RefSeq" id="NP_001273065.1">
    <molecule id="Q96PU9-3"/>
    <property type="nucleotide sequence ID" value="NM_001286136.2"/>
</dbReference>
<dbReference type="RefSeq" id="NP_444510.2">
    <molecule id="Q96PU9-1"/>
    <property type="nucleotide sequence ID" value="NM_053280.4"/>
</dbReference>
<dbReference type="SMR" id="Q96PU9"/>
<dbReference type="BioGRID" id="125258">
    <property type="interactions" value="11"/>
</dbReference>
<dbReference type="FunCoup" id="Q96PU9">
    <property type="interactions" value="3"/>
</dbReference>
<dbReference type="IntAct" id="Q96PU9">
    <property type="interactions" value="11"/>
</dbReference>
<dbReference type="STRING" id="9606.ENSP00000325868"/>
<dbReference type="GlyGen" id="Q96PU9">
    <property type="glycosylation" value="1 site"/>
</dbReference>
<dbReference type="iPTMnet" id="Q96PU9"/>
<dbReference type="PhosphoSitePlus" id="Q96PU9"/>
<dbReference type="BioMuta" id="ODF3"/>
<dbReference type="DMDM" id="74717117"/>
<dbReference type="MassIVE" id="Q96PU9"/>
<dbReference type="PaxDb" id="9606-ENSP00000325868"/>
<dbReference type="PeptideAtlas" id="Q96PU9"/>
<dbReference type="ProteomicsDB" id="7234"/>
<dbReference type="ProteomicsDB" id="77767">
    <molecule id="Q96PU9-1"/>
</dbReference>
<dbReference type="ProteomicsDB" id="77768">
    <molecule id="Q96PU9-2"/>
</dbReference>
<dbReference type="Antibodypedia" id="48707">
    <property type="antibodies" value="102 antibodies from 20 providers"/>
</dbReference>
<dbReference type="DNASU" id="113746"/>
<dbReference type="Ensembl" id="ENST00000325113.9">
    <molecule id="Q96PU9-1"/>
    <property type="protein sequence ID" value="ENSP00000325868.5"/>
    <property type="gene ID" value="ENSG00000177947.15"/>
</dbReference>
<dbReference type="Ensembl" id="ENST00000525282.1">
    <molecule id="Q96PU9-3"/>
    <property type="protein sequence ID" value="ENSP00000436588.1"/>
    <property type="gene ID" value="ENSG00000177947.15"/>
</dbReference>
<dbReference type="GeneID" id="113746"/>
<dbReference type="KEGG" id="hsa:113746"/>
<dbReference type="MANE-Select" id="ENST00000325113.9">
    <property type="protein sequence ID" value="ENSP00000325868.5"/>
    <property type="RefSeq nucleotide sequence ID" value="NM_053280.5"/>
    <property type="RefSeq protein sequence ID" value="NP_444510.2"/>
</dbReference>
<dbReference type="UCSC" id="uc001lob.4">
    <molecule id="Q96PU9-1"/>
    <property type="organism name" value="human"/>
</dbReference>
<dbReference type="AGR" id="HGNC:19905"/>
<dbReference type="CTD" id="113746"/>
<dbReference type="DisGeNET" id="113746"/>
<dbReference type="GeneCards" id="CIMAP1A"/>
<dbReference type="HGNC" id="HGNC:19905">
    <property type="gene designation" value="CIMAP1A"/>
</dbReference>
<dbReference type="HPA" id="ENSG00000177947">
    <property type="expression patterns" value="Tissue enriched (testis)"/>
</dbReference>
<dbReference type="MIM" id="608356">
    <property type="type" value="gene"/>
</dbReference>
<dbReference type="neXtProt" id="NX_Q96PU9"/>
<dbReference type="OpenTargets" id="ENSG00000177947"/>
<dbReference type="PharmGKB" id="PA134952791"/>
<dbReference type="VEuPathDB" id="HostDB:ENSG00000177947"/>
<dbReference type="eggNOG" id="ENOG502QUIJ">
    <property type="taxonomic scope" value="Eukaryota"/>
</dbReference>
<dbReference type="GeneTree" id="ENSGT00940000156191"/>
<dbReference type="HOGENOM" id="CLU_088282_0_0_1"/>
<dbReference type="InParanoid" id="Q96PU9"/>
<dbReference type="OMA" id="LMGRTQK"/>
<dbReference type="OrthoDB" id="429991at2759"/>
<dbReference type="PAN-GO" id="Q96PU9">
    <property type="GO annotations" value="2 GO annotations based on evolutionary models"/>
</dbReference>
<dbReference type="PhylomeDB" id="Q96PU9"/>
<dbReference type="TreeFam" id="TF325804"/>
<dbReference type="PathwayCommons" id="Q96PU9"/>
<dbReference type="SignaLink" id="Q96PU9"/>
<dbReference type="BioGRID-ORCS" id="113746">
    <property type="hits" value="18 hits in 766 CRISPR screens"/>
</dbReference>
<dbReference type="GenomeRNAi" id="113746"/>
<dbReference type="Pharos" id="Q96PU9">
    <property type="development level" value="Tbio"/>
</dbReference>
<dbReference type="PRO" id="PR:Q96PU9"/>
<dbReference type="Proteomes" id="UP000005640">
    <property type="component" value="Chromosome 11"/>
</dbReference>
<dbReference type="RNAct" id="Q96PU9">
    <property type="molecule type" value="protein"/>
</dbReference>
<dbReference type="Bgee" id="ENSG00000177947">
    <property type="expression patterns" value="Expressed in left testis and 27 other cell types or tissues"/>
</dbReference>
<dbReference type="ExpressionAtlas" id="Q96PU9">
    <property type="expression patterns" value="baseline and differential"/>
</dbReference>
<dbReference type="GO" id="GO:0005737">
    <property type="term" value="C:cytoplasm"/>
    <property type="evidence" value="ECO:0007669"/>
    <property type="project" value="UniProtKB-SubCell"/>
</dbReference>
<dbReference type="GO" id="GO:0005856">
    <property type="term" value="C:cytoskeleton"/>
    <property type="evidence" value="ECO:0000318"/>
    <property type="project" value="GO_Central"/>
</dbReference>
<dbReference type="GO" id="GO:0001520">
    <property type="term" value="C:outer dense fiber"/>
    <property type="evidence" value="ECO:0000318"/>
    <property type="project" value="GO_Central"/>
</dbReference>
<dbReference type="GO" id="GO:0030154">
    <property type="term" value="P:cell differentiation"/>
    <property type="evidence" value="ECO:0007669"/>
    <property type="project" value="UniProtKB-KW"/>
</dbReference>
<dbReference type="GO" id="GO:0030317">
    <property type="term" value="P:flagellated sperm motility"/>
    <property type="evidence" value="ECO:0007669"/>
    <property type="project" value="Ensembl"/>
</dbReference>
<dbReference type="GO" id="GO:0007283">
    <property type="term" value="P:spermatogenesis"/>
    <property type="evidence" value="ECO:0007669"/>
    <property type="project" value="UniProtKB-KW"/>
</dbReference>
<dbReference type="InterPro" id="IPR051291">
    <property type="entry name" value="CIMAP"/>
</dbReference>
<dbReference type="InterPro" id="IPR010736">
    <property type="entry name" value="SHIPPO-rpt"/>
</dbReference>
<dbReference type="PANTHER" id="PTHR21580:SF23">
    <property type="entry name" value="OUTER DENSE FIBER PROTEIN 3"/>
    <property type="match status" value="1"/>
</dbReference>
<dbReference type="PANTHER" id="PTHR21580">
    <property type="entry name" value="SHIPPO-1-RELATED"/>
    <property type="match status" value="1"/>
</dbReference>
<dbReference type="Pfam" id="PF07004">
    <property type="entry name" value="SHIPPO-rpt"/>
    <property type="match status" value="4"/>
</dbReference>
<comment type="function">
    <text evidence="1">Outer dense fibers are filamentous structures located on the outside of the axoneme in the midpiece and principal piece of the mammalian sperm tail. May help to maintain the passive elastic structures and elastic recoil of the sperm tail.</text>
</comment>
<comment type="subunit">
    <text evidence="1">Microtubule inner protein component of sperm flagellar doublet microtubules.</text>
</comment>
<comment type="interaction">
    <interactant intactId="EBI-12002088">
        <id>Q96PU9</id>
    </interactant>
    <interactant intactId="EBI-349105">
        <id>P63167</id>
        <label>DYNLL1</label>
    </interactant>
    <organismsDiffer>false</organismsDiffer>
    <experiments>3</experiments>
</comment>
<comment type="interaction">
    <interactant intactId="EBI-12002088">
        <id>Q96PU9</id>
    </interactant>
    <interactant intactId="EBI-9658477">
        <id>Q86XE5</id>
        <label>HOGA1</label>
    </interactant>
    <organismsDiffer>false</organismsDiffer>
    <experiments>3</experiments>
</comment>
<comment type="subcellular location">
    <subcellularLocation>
        <location evidence="1">Cytoplasm</location>
    </subcellularLocation>
    <subcellularLocation>
        <location evidence="1">Cytoplasm</location>
        <location evidence="1">Cytoskeleton</location>
        <location evidence="1">Flagellum axoneme</location>
    </subcellularLocation>
    <text evidence="1">Expressed in the cytoplasmic lobe of spermatids.</text>
</comment>
<comment type="alternative products">
    <event type="alternative splicing"/>
    <isoform>
        <id>Q96PU9-1</id>
        <name>1</name>
        <sequence type="displayed"/>
    </isoform>
    <isoform>
        <id>Q96PU9-2</id>
        <name>2</name>
        <sequence type="described" ref="VSP_027686 VSP_027687"/>
    </isoform>
    <isoform>
        <id>Q96PU9-3</id>
        <name>3</name>
        <sequence type="described" ref="VSP_054893"/>
    </isoform>
</comment>
<comment type="tissue specificity">
    <text evidence="3 4">Testis-specific.</text>
</comment>
<comment type="miscellaneous">
    <text evidence="1">'Shippo' is a Japanese word for tail.</text>
</comment>
<comment type="similarity">
    <text evidence="8">Belongs to the CIMAP family.</text>
</comment>
<feature type="chain" id="PRO_0000299464" description="Ciliary microtubule associated protein 1A">
    <location>
        <begin position="1"/>
        <end position="254"/>
    </location>
</feature>
<feature type="repeat" description="STPGR 1">
    <location>
        <begin position="180"/>
        <end position="205"/>
    </location>
</feature>
<feature type="repeat" description="STPGR 2">
    <location>
        <begin position="216"/>
        <end position="241"/>
    </location>
</feature>
<feature type="region of interest" description="Disordered" evidence="2">
    <location>
        <begin position="207"/>
        <end position="226"/>
    </location>
</feature>
<feature type="splice variant" id="VSP_027686" description="In isoform 2." evidence="7">
    <original>GDYFPEKSTKYVFDSAPSHSISARTKAFRVDSTPG</original>
    <variation>ALKSAFPSWTPRDPTWSPPVLEPRGPTPRMLGSPP</variation>
    <location>
        <begin position="104"/>
        <end position="138"/>
    </location>
</feature>
<feature type="splice variant" id="VSP_027687" description="In isoform 2." evidence="7">
    <location>
        <begin position="139"/>
        <end position="254"/>
    </location>
</feature>
<feature type="splice variant" id="VSP_054893" description="In isoform 3." evidence="6">
    <location>
        <begin position="178"/>
        <end position="224"/>
    </location>
</feature>
<sequence length="254" mass="27710">MTEEVWMGTWRPHRPRGPIMALYSSPGPKYLIPPTTGFMKHTPTKLRAPAYSFRGAPMLLAENCSPGPRYNVNPKILRTGKDLGPAYSILGRYQTKTMLTPGPGDYFPEKSTKYVFDSAPSHSISARTKAFRVDSTPGPAAYMLPMVMGPNTVGKASQPSFSIKGRSKLGGFSDDLHKTPGPAAYRQTDVRVTKFKAPQYTMAARVEPPGDKTLKPGPGAHSPEKVTLTKPCAPVVTFGIKHSDYMTPLLVDVE</sequence>
<reference key="1">
    <citation type="journal article" date="2002" name="Biol. Reprod.">
        <title>Molecular cloning and characterization of a complementary DNA encoding sperm tail protein SHIPPO 1.</title>
        <authorList>
            <person name="Egydio de Carvalho C."/>
            <person name="Tanaka H."/>
            <person name="Iguchi N."/>
            <person name="Ventela S."/>
            <person name="Nojima H."/>
            <person name="Nishimune Y."/>
        </authorList>
    </citation>
    <scope>NUCLEOTIDE SEQUENCE [MRNA] (ISOFORM 1)</scope>
    <scope>TISSUE SPECIFICITY</scope>
    <source>
        <tissue>Testis</tissue>
    </source>
</reference>
<reference key="2">
    <citation type="journal article" date="2004" name="Reprod. Med. Biol.">
        <title>The human transcript induced in spermatogenesis 50.</title>
        <authorList>
            <person name="Sasaki Y."/>
            <person name="Miyamoto T."/>
            <person name="Sengoku K."/>
            <person name="Hayashi H."/>
            <person name="Takuma N."/>
            <person name="Ishikawa M."/>
        </authorList>
    </citation>
    <scope>NUCLEOTIDE SEQUENCE [MRNA] (ISOFORM 1)</scope>
    <scope>TISSUE SPECIFICITY</scope>
</reference>
<reference key="3">
    <citation type="journal article" date="2007" name="BMC Genomics">
        <title>The full-ORF clone resource of the German cDNA consortium.</title>
        <authorList>
            <person name="Bechtel S."/>
            <person name="Rosenfelder H."/>
            <person name="Duda A."/>
            <person name="Schmidt C.P."/>
            <person name="Ernst U."/>
            <person name="Wellenreuther R."/>
            <person name="Mehrle A."/>
            <person name="Schuster C."/>
            <person name="Bahr A."/>
            <person name="Bloecker H."/>
            <person name="Heubner D."/>
            <person name="Hoerlein A."/>
            <person name="Michel G."/>
            <person name="Wedler H."/>
            <person name="Koehrer K."/>
            <person name="Ottenwaelder B."/>
            <person name="Poustka A."/>
            <person name="Wiemann S."/>
            <person name="Schupp I."/>
        </authorList>
    </citation>
    <scope>NUCLEOTIDE SEQUENCE [LARGE SCALE MRNA] (ISOFORM 2)</scope>
    <source>
        <tissue>Testis</tissue>
    </source>
</reference>
<reference key="4">
    <citation type="journal article" date="2006" name="Nature">
        <title>Human chromosome 11 DNA sequence and analysis including novel gene identification.</title>
        <authorList>
            <person name="Taylor T.D."/>
            <person name="Noguchi H."/>
            <person name="Totoki Y."/>
            <person name="Toyoda A."/>
            <person name="Kuroki Y."/>
            <person name="Dewar K."/>
            <person name="Lloyd C."/>
            <person name="Itoh T."/>
            <person name="Takeda T."/>
            <person name="Kim D.-W."/>
            <person name="She X."/>
            <person name="Barlow K.F."/>
            <person name="Bloom T."/>
            <person name="Bruford E."/>
            <person name="Chang J.L."/>
            <person name="Cuomo C.A."/>
            <person name="Eichler E."/>
            <person name="FitzGerald M.G."/>
            <person name="Jaffe D.B."/>
            <person name="LaButti K."/>
            <person name="Nicol R."/>
            <person name="Park H.-S."/>
            <person name="Seaman C."/>
            <person name="Sougnez C."/>
            <person name="Yang X."/>
            <person name="Zimmer A.R."/>
            <person name="Zody M.C."/>
            <person name="Birren B.W."/>
            <person name="Nusbaum C."/>
            <person name="Fujiyama A."/>
            <person name="Hattori M."/>
            <person name="Rogers J."/>
            <person name="Lander E.S."/>
            <person name="Sakaki Y."/>
        </authorList>
    </citation>
    <scope>NUCLEOTIDE SEQUENCE [LARGE SCALE GENOMIC DNA]</scope>
</reference>
<reference key="5">
    <citation type="journal article" date="2004" name="Genome Res.">
        <title>The status, quality, and expansion of the NIH full-length cDNA project: the Mammalian Gene Collection (MGC).</title>
        <authorList>
            <consortium name="The MGC Project Team"/>
        </authorList>
    </citation>
    <scope>NUCLEOTIDE SEQUENCE [LARGE SCALE MRNA] (ISOFORMS 1 AND 3)</scope>
</reference>
<proteinExistence type="evidence at protein level"/>
<keyword id="KW-0025">Alternative splicing</keyword>
<keyword id="KW-0966">Cell projection</keyword>
<keyword id="KW-0969">Cilium</keyword>
<keyword id="KW-0963">Cytoplasm</keyword>
<keyword id="KW-0206">Cytoskeleton</keyword>
<keyword id="KW-0217">Developmental protein</keyword>
<keyword id="KW-0221">Differentiation</keyword>
<keyword id="KW-0282">Flagellum</keyword>
<keyword id="KW-1267">Proteomics identification</keyword>
<keyword id="KW-1185">Reference proteome</keyword>
<keyword id="KW-0677">Repeat</keyword>
<keyword id="KW-0744">Spermatogenesis</keyword>